<reference key="1">
    <citation type="journal article" date="2005" name="J. Bacteriol.">
        <title>Whole-genome sequencing of Staphylococcus haemolyticus uncovers the extreme plasticity of its genome and the evolution of human-colonizing staphylococcal species.</title>
        <authorList>
            <person name="Takeuchi F."/>
            <person name="Watanabe S."/>
            <person name="Baba T."/>
            <person name="Yuzawa H."/>
            <person name="Ito T."/>
            <person name="Morimoto Y."/>
            <person name="Kuroda M."/>
            <person name="Cui L."/>
            <person name="Takahashi M."/>
            <person name="Ankai A."/>
            <person name="Baba S."/>
            <person name="Fukui S."/>
            <person name="Lee J.C."/>
            <person name="Hiramatsu K."/>
        </authorList>
    </citation>
    <scope>NUCLEOTIDE SEQUENCE [LARGE SCALE GENOMIC DNA]</scope>
    <source>
        <strain>JCSC1435</strain>
    </source>
</reference>
<dbReference type="EC" id="2.7.11.32" evidence="1"/>
<dbReference type="EC" id="2.7.4.27" evidence="1"/>
<dbReference type="EMBL" id="AP006716">
    <property type="protein sequence ID" value="BAE03751.1"/>
    <property type="molecule type" value="Genomic_DNA"/>
</dbReference>
<dbReference type="RefSeq" id="WP_011274768.1">
    <property type="nucleotide sequence ID" value="NC_007168.1"/>
</dbReference>
<dbReference type="SMR" id="Q4L9C4"/>
<dbReference type="KEGG" id="sha:SH0442"/>
<dbReference type="eggNOG" id="COG1806">
    <property type="taxonomic scope" value="Bacteria"/>
</dbReference>
<dbReference type="HOGENOM" id="CLU_046206_2_1_9"/>
<dbReference type="OrthoDB" id="9782201at2"/>
<dbReference type="Proteomes" id="UP000000543">
    <property type="component" value="Chromosome"/>
</dbReference>
<dbReference type="GO" id="GO:0043531">
    <property type="term" value="F:ADP binding"/>
    <property type="evidence" value="ECO:0007669"/>
    <property type="project" value="UniProtKB-UniRule"/>
</dbReference>
<dbReference type="GO" id="GO:0005524">
    <property type="term" value="F:ATP binding"/>
    <property type="evidence" value="ECO:0007669"/>
    <property type="project" value="InterPro"/>
</dbReference>
<dbReference type="GO" id="GO:0016776">
    <property type="term" value="F:phosphotransferase activity, phosphate group as acceptor"/>
    <property type="evidence" value="ECO:0007669"/>
    <property type="project" value="UniProtKB-UniRule"/>
</dbReference>
<dbReference type="GO" id="GO:0004674">
    <property type="term" value="F:protein serine/threonine kinase activity"/>
    <property type="evidence" value="ECO:0007669"/>
    <property type="project" value="UniProtKB-UniRule"/>
</dbReference>
<dbReference type="HAMAP" id="MF_00921">
    <property type="entry name" value="PDRP"/>
    <property type="match status" value="1"/>
</dbReference>
<dbReference type="InterPro" id="IPR005177">
    <property type="entry name" value="Kinase-pyrophosphorylase"/>
</dbReference>
<dbReference type="InterPro" id="IPR026565">
    <property type="entry name" value="PPDK_reg"/>
</dbReference>
<dbReference type="NCBIfam" id="NF003742">
    <property type="entry name" value="PRK05339.1"/>
    <property type="match status" value="1"/>
</dbReference>
<dbReference type="PANTHER" id="PTHR31756">
    <property type="entry name" value="PYRUVATE, PHOSPHATE DIKINASE REGULATORY PROTEIN 1, CHLOROPLASTIC"/>
    <property type="match status" value="1"/>
</dbReference>
<dbReference type="PANTHER" id="PTHR31756:SF3">
    <property type="entry name" value="PYRUVATE, PHOSPHATE DIKINASE REGULATORY PROTEIN 1, CHLOROPLASTIC"/>
    <property type="match status" value="1"/>
</dbReference>
<dbReference type="Pfam" id="PF03618">
    <property type="entry name" value="Kinase-PPPase"/>
    <property type="match status" value="1"/>
</dbReference>
<comment type="function">
    <text evidence="1">Bifunctional serine/threonine kinase and phosphorylase involved in the regulation of the pyruvate, phosphate dikinase (PPDK) by catalyzing its phosphorylation/dephosphorylation.</text>
</comment>
<comment type="catalytic activity">
    <reaction evidence="1">
        <text>N(tele)-phospho-L-histidyl/L-threonyl-[pyruvate, phosphate dikinase] + ADP = N(tele)-phospho-L-histidyl/O-phospho-L-threonyl-[pyruvate, phosphate dikinase] + AMP + H(+)</text>
        <dbReference type="Rhea" id="RHEA:43692"/>
        <dbReference type="Rhea" id="RHEA-COMP:10650"/>
        <dbReference type="Rhea" id="RHEA-COMP:10651"/>
        <dbReference type="ChEBI" id="CHEBI:15378"/>
        <dbReference type="ChEBI" id="CHEBI:30013"/>
        <dbReference type="ChEBI" id="CHEBI:61977"/>
        <dbReference type="ChEBI" id="CHEBI:83586"/>
        <dbReference type="ChEBI" id="CHEBI:456215"/>
        <dbReference type="ChEBI" id="CHEBI:456216"/>
        <dbReference type="EC" id="2.7.11.32"/>
    </reaction>
</comment>
<comment type="catalytic activity">
    <reaction evidence="1">
        <text>N(tele)-phospho-L-histidyl/O-phospho-L-threonyl-[pyruvate, phosphate dikinase] + phosphate + H(+) = N(tele)-phospho-L-histidyl/L-threonyl-[pyruvate, phosphate dikinase] + diphosphate</text>
        <dbReference type="Rhea" id="RHEA:43696"/>
        <dbReference type="Rhea" id="RHEA-COMP:10650"/>
        <dbReference type="Rhea" id="RHEA-COMP:10651"/>
        <dbReference type="ChEBI" id="CHEBI:15378"/>
        <dbReference type="ChEBI" id="CHEBI:30013"/>
        <dbReference type="ChEBI" id="CHEBI:33019"/>
        <dbReference type="ChEBI" id="CHEBI:43474"/>
        <dbReference type="ChEBI" id="CHEBI:61977"/>
        <dbReference type="ChEBI" id="CHEBI:83586"/>
        <dbReference type="EC" id="2.7.4.27"/>
    </reaction>
</comment>
<comment type="similarity">
    <text evidence="1">Belongs to the pyruvate, phosphate/water dikinase regulatory protein family. PDRP subfamily.</text>
</comment>
<evidence type="ECO:0000255" key="1">
    <source>
        <dbReference type="HAMAP-Rule" id="MF_00921"/>
    </source>
</evidence>
<gene>
    <name type="ordered locus">SH0442</name>
</gene>
<keyword id="KW-0418">Kinase</keyword>
<keyword id="KW-0547">Nucleotide-binding</keyword>
<keyword id="KW-0723">Serine/threonine-protein kinase</keyword>
<keyword id="KW-0808">Transferase</keyword>
<proteinExistence type="inferred from homology"/>
<sequence>MNETQSNEQILKLFIVSDSIGETAQRMIHATLTQFPDLHNVEIKKFPYIKDEEEFLNILNLAREQHAIVATTLVSESFNALGHQFAHEHDIPYVDYMSDLISIIEKVTHSQPLMESGALRKLNDEYFKRIEAIEYSVKYDDGKHFTDIGEADALIVGVSRTSKTPLSMYLANKGYKIANIPLVPEIEIPDNVYKQKGLKVFGLTASPQYIANIRKNRAETLGLSSESRYNNLDRIKKELVYAEEVFKKLNATVINTEYKSIEESAFYIEKFLQPKL</sequence>
<accession>Q4L9C4</accession>
<name>PDRP1_STAHJ</name>
<feature type="chain" id="PRO_0000196725" description="Putative pyruvate, phosphate dikinase regulatory protein 1">
    <location>
        <begin position="1"/>
        <end position="276"/>
    </location>
</feature>
<feature type="binding site" evidence="1">
    <location>
        <begin position="157"/>
        <end position="164"/>
    </location>
    <ligand>
        <name>ADP</name>
        <dbReference type="ChEBI" id="CHEBI:456216"/>
    </ligand>
</feature>
<protein>
    <recommendedName>
        <fullName evidence="1">Putative pyruvate, phosphate dikinase regulatory protein 1</fullName>
        <shortName evidence="1">PPDK regulatory protein 1</shortName>
        <ecNumber evidence="1">2.7.11.32</ecNumber>
        <ecNumber evidence="1">2.7.4.27</ecNumber>
    </recommendedName>
</protein>
<organism>
    <name type="scientific">Staphylococcus haemolyticus (strain JCSC1435)</name>
    <dbReference type="NCBI Taxonomy" id="279808"/>
    <lineage>
        <taxon>Bacteria</taxon>
        <taxon>Bacillati</taxon>
        <taxon>Bacillota</taxon>
        <taxon>Bacilli</taxon>
        <taxon>Bacillales</taxon>
        <taxon>Staphylococcaceae</taxon>
        <taxon>Staphylococcus</taxon>
    </lineage>
</organism>